<name>RPOC_RHOBA</name>
<dbReference type="EC" id="2.7.7.6" evidence="1"/>
<dbReference type="EMBL" id="BX294142">
    <property type="protein sequence ID" value="CAD74223.1"/>
    <property type="molecule type" value="Genomic_DNA"/>
</dbReference>
<dbReference type="RefSeq" id="NP_866684.1">
    <property type="nucleotide sequence ID" value="NC_005027.1"/>
</dbReference>
<dbReference type="RefSeq" id="WP_007333812.1">
    <property type="nucleotide sequence ID" value="NC_005027.1"/>
</dbReference>
<dbReference type="SMR" id="Q7URW4"/>
<dbReference type="FunCoup" id="Q7URW4">
    <property type="interactions" value="539"/>
</dbReference>
<dbReference type="STRING" id="243090.RB5416"/>
<dbReference type="EnsemblBacteria" id="CAD74223">
    <property type="protein sequence ID" value="CAD74223"/>
    <property type="gene ID" value="RB5416"/>
</dbReference>
<dbReference type="KEGG" id="rba:RB5416"/>
<dbReference type="PATRIC" id="fig|243090.15.peg.2601"/>
<dbReference type="eggNOG" id="COG0086">
    <property type="taxonomic scope" value="Bacteria"/>
</dbReference>
<dbReference type="HOGENOM" id="CLU_000524_3_1_0"/>
<dbReference type="InParanoid" id="Q7URW4"/>
<dbReference type="OrthoDB" id="9815296at2"/>
<dbReference type="Proteomes" id="UP000001025">
    <property type="component" value="Chromosome"/>
</dbReference>
<dbReference type="GO" id="GO:0000428">
    <property type="term" value="C:DNA-directed RNA polymerase complex"/>
    <property type="evidence" value="ECO:0007669"/>
    <property type="project" value="UniProtKB-KW"/>
</dbReference>
<dbReference type="GO" id="GO:0003677">
    <property type="term" value="F:DNA binding"/>
    <property type="evidence" value="ECO:0007669"/>
    <property type="project" value="UniProtKB-UniRule"/>
</dbReference>
<dbReference type="GO" id="GO:0003899">
    <property type="term" value="F:DNA-directed RNA polymerase activity"/>
    <property type="evidence" value="ECO:0007669"/>
    <property type="project" value="UniProtKB-UniRule"/>
</dbReference>
<dbReference type="GO" id="GO:0000287">
    <property type="term" value="F:magnesium ion binding"/>
    <property type="evidence" value="ECO:0007669"/>
    <property type="project" value="UniProtKB-UniRule"/>
</dbReference>
<dbReference type="GO" id="GO:0008270">
    <property type="term" value="F:zinc ion binding"/>
    <property type="evidence" value="ECO:0007669"/>
    <property type="project" value="UniProtKB-UniRule"/>
</dbReference>
<dbReference type="GO" id="GO:0006351">
    <property type="term" value="P:DNA-templated transcription"/>
    <property type="evidence" value="ECO:0007669"/>
    <property type="project" value="UniProtKB-UniRule"/>
</dbReference>
<dbReference type="CDD" id="cd02655">
    <property type="entry name" value="RNAP_beta'_C"/>
    <property type="match status" value="1"/>
</dbReference>
<dbReference type="CDD" id="cd01609">
    <property type="entry name" value="RNAP_beta'_N"/>
    <property type="match status" value="1"/>
</dbReference>
<dbReference type="Gene3D" id="1.10.132.30">
    <property type="match status" value="1"/>
</dbReference>
<dbReference type="Gene3D" id="1.10.150.390">
    <property type="match status" value="1"/>
</dbReference>
<dbReference type="Gene3D" id="1.10.1790.20">
    <property type="match status" value="1"/>
</dbReference>
<dbReference type="Gene3D" id="1.10.40.90">
    <property type="match status" value="1"/>
</dbReference>
<dbReference type="Gene3D" id="2.40.40.20">
    <property type="match status" value="1"/>
</dbReference>
<dbReference type="Gene3D" id="2.40.50.100">
    <property type="match status" value="3"/>
</dbReference>
<dbReference type="Gene3D" id="3.30.60.280">
    <property type="match status" value="1"/>
</dbReference>
<dbReference type="Gene3D" id="4.10.860.120">
    <property type="entry name" value="RNA polymerase II, clamp domain"/>
    <property type="match status" value="1"/>
</dbReference>
<dbReference type="Gene3D" id="1.10.274.100">
    <property type="entry name" value="RNA polymerase Rpb1, domain 3"/>
    <property type="match status" value="1"/>
</dbReference>
<dbReference type="HAMAP" id="MF_01322">
    <property type="entry name" value="RNApol_bact_RpoC"/>
    <property type="match status" value="1"/>
</dbReference>
<dbReference type="InterPro" id="IPR045867">
    <property type="entry name" value="DNA-dir_RpoC_beta_prime"/>
</dbReference>
<dbReference type="InterPro" id="IPR012754">
    <property type="entry name" value="DNA-dir_RpoC_beta_prime_bact"/>
</dbReference>
<dbReference type="InterPro" id="IPR000722">
    <property type="entry name" value="RNA_pol_asu"/>
</dbReference>
<dbReference type="InterPro" id="IPR006592">
    <property type="entry name" value="RNA_pol_N"/>
</dbReference>
<dbReference type="InterPro" id="IPR007080">
    <property type="entry name" value="RNA_pol_Rpb1_1"/>
</dbReference>
<dbReference type="InterPro" id="IPR007066">
    <property type="entry name" value="RNA_pol_Rpb1_3"/>
</dbReference>
<dbReference type="InterPro" id="IPR042102">
    <property type="entry name" value="RNA_pol_Rpb1_3_sf"/>
</dbReference>
<dbReference type="InterPro" id="IPR007083">
    <property type="entry name" value="RNA_pol_Rpb1_4"/>
</dbReference>
<dbReference type="InterPro" id="IPR007081">
    <property type="entry name" value="RNA_pol_Rpb1_5"/>
</dbReference>
<dbReference type="InterPro" id="IPR044893">
    <property type="entry name" value="RNA_pol_Rpb1_clamp_domain"/>
</dbReference>
<dbReference type="InterPro" id="IPR038120">
    <property type="entry name" value="Rpb1_funnel_sf"/>
</dbReference>
<dbReference type="NCBIfam" id="TIGR02386">
    <property type="entry name" value="rpoC_TIGR"/>
    <property type="match status" value="1"/>
</dbReference>
<dbReference type="PANTHER" id="PTHR19376">
    <property type="entry name" value="DNA-DIRECTED RNA POLYMERASE"/>
    <property type="match status" value="1"/>
</dbReference>
<dbReference type="PANTHER" id="PTHR19376:SF54">
    <property type="entry name" value="DNA-DIRECTED RNA POLYMERASE SUBUNIT BETA"/>
    <property type="match status" value="1"/>
</dbReference>
<dbReference type="Pfam" id="PF04997">
    <property type="entry name" value="RNA_pol_Rpb1_1"/>
    <property type="match status" value="1"/>
</dbReference>
<dbReference type="Pfam" id="PF00623">
    <property type="entry name" value="RNA_pol_Rpb1_2"/>
    <property type="match status" value="1"/>
</dbReference>
<dbReference type="Pfam" id="PF04983">
    <property type="entry name" value="RNA_pol_Rpb1_3"/>
    <property type="match status" value="1"/>
</dbReference>
<dbReference type="Pfam" id="PF05000">
    <property type="entry name" value="RNA_pol_Rpb1_4"/>
    <property type="match status" value="1"/>
</dbReference>
<dbReference type="Pfam" id="PF04998">
    <property type="entry name" value="RNA_pol_Rpb1_5"/>
    <property type="match status" value="1"/>
</dbReference>
<dbReference type="SMART" id="SM00663">
    <property type="entry name" value="RPOLA_N"/>
    <property type="match status" value="1"/>
</dbReference>
<dbReference type="SUPFAM" id="SSF64484">
    <property type="entry name" value="beta and beta-prime subunits of DNA dependent RNA-polymerase"/>
    <property type="match status" value="1"/>
</dbReference>
<keyword id="KW-0240">DNA-directed RNA polymerase</keyword>
<keyword id="KW-0460">Magnesium</keyword>
<keyword id="KW-0479">Metal-binding</keyword>
<keyword id="KW-0548">Nucleotidyltransferase</keyword>
<keyword id="KW-1185">Reference proteome</keyword>
<keyword id="KW-0804">Transcription</keyword>
<keyword id="KW-0808">Transferase</keyword>
<keyword id="KW-0862">Zinc</keyword>
<reference key="1">
    <citation type="journal article" date="2003" name="Proc. Natl. Acad. Sci. U.S.A.">
        <title>Complete genome sequence of the marine planctomycete Pirellula sp. strain 1.</title>
        <authorList>
            <person name="Gloeckner F.O."/>
            <person name="Kube M."/>
            <person name="Bauer M."/>
            <person name="Teeling H."/>
            <person name="Lombardot T."/>
            <person name="Ludwig W."/>
            <person name="Gade D."/>
            <person name="Beck A."/>
            <person name="Borzym K."/>
            <person name="Heitmann K."/>
            <person name="Rabus R."/>
            <person name="Schlesner H."/>
            <person name="Amann R."/>
            <person name="Reinhardt R."/>
        </authorList>
    </citation>
    <scope>NUCLEOTIDE SEQUENCE [LARGE SCALE GENOMIC DNA]</scope>
    <source>
        <strain>DSM 10527 / NCIMB 13988 / SH1</strain>
    </source>
</reference>
<protein>
    <recommendedName>
        <fullName evidence="1">DNA-directed RNA polymerase subunit beta'</fullName>
        <shortName evidence="1">RNAP subunit beta'</shortName>
        <ecNumber evidence="1">2.7.7.6</ecNumber>
    </recommendedName>
    <alternativeName>
        <fullName evidence="1">RNA polymerase subunit beta'</fullName>
    </alternativeName>
    <alternativeName>
        <fullName evidence="1">Transcriptase subunit beta'</fullName>
    </alternativeName>
</protein>
<proteinExistence type="inferred from homology"/>
<sequence length="1429" mass="159165">MSIGETSNYDRINDYASVRISLARPQDIKAWSFGEVKKPETINYRTYRPEKDGLFCERIFGPEKDWECACGKYRGMKYKGMICDRCGVKVTHSRVRRKRMGHIELAAPVVHIWFFKAMPSRLGNLLAMKTSSLEKVIYFQDYVVTDPKDTDLEMLQLLTEEEYRAARQQYGSGSFQADMGAEAVRDLLNKLDLVTLSDQLRVDLAETGSKQKKKDLINRLKIVESIRDSDNRPEWMVLDVIPVIPPDLRPLVLLDSGNFATSDLNDLYRRIINRNNRLRKLVDLNAPEVIIRNEKRMLQQSVDALFDNNRCKRPVLGSSNRPLKSLTDMIKGKQGRFRENLLGKRVDYSARSVIVVGPRLKLHQCGLPKKIALELYQPFIIRRLKELGHADTIKSAKKMLERKDEEVWDILEQVITNHPVLLNRAPTLHRMGIQAFEPTLVEGNAIHLHPLVCKGFNADFDGDQMAVHLPLSIEAQVEAHTLMMSTNNVFAPSNGKPIMSPSQDIVMGCYFMTVEMPDQKGEGMTFSTYEEVDYALAQGIVGLHTRIKLRLPKYQKLKTDDESGEYGAIIDTTPGRVRFNEMLPVGMDFYNRAMRSGDLAKSISDCYQRLGRKATIHLLDDMMQTGFRESTRSGLSFATDDLVTPDTKLQFIKEAEKEVMKHKKAYDRGLMTGKERYNQVLDAWTHAREAITADMMSAMENDIRPGGWYINPVFLMSHSGARGGIEQIRQLAGMRGLMAKPTGEIIETPIKANFREGLSVLEYFSSTHGARKGLADTALKTADSGYLTRKLADVAQNVVVTMHDCGTTQGITKGVVYRGEKVEVSLAESINGRVSLKSIVNPVTDEVIVEANQMITPEIARNIEAMGLEKIQVRTPMSCDAPLGVCRCCYGMDMSTGSMVEEGMAVGIIAAQSIGEPGTQLTMRTFHIGGSVSKQVEESDIKTSRDGEVRLTRMKAVTNAEGRDIVLTRNGQIMLVDDRGREVESYDIPTGAMLMVKEGDKVTAGQVLCEWNPYSIPILSEVTGKIRFEDVVEGETMRLDREASGNTRMTIIDHKGDLHPQLVIEDETGRPLHAQYLPERATISVKEGEEVIPGKVLAEMPRETGGVSDITGGLPRVTEIFEARKPKDPAVIAEVDGEVEILSERKRGKRTIIVRSESGIEREHLVPHGKHFLVHTGDIVKAGQALVDGALVPHDILRVTGEEAVQQYLLHEIQQVYRSQRVEINDKHGEIIIARMLRKVKIENAGDTNLLPGSVMDRFHFRKANQDLQKCIKIANPGDTDYTEGTIVPKEAFEQTNAEVEAMGGTPAKGKRCKSATASTQLLGITKAAVQSNSFISAASFQETTKVLTEAALAGKVDKLVGLKENVILGHLIPAGTGFRIFQESEVNYRREALEELSQAPVSALEESFPLLGGDGEPASTTSSTTEGE</sequence>
<organism>
    <name type="scientific">Rhodopirellula baltica (strain DSM 10527 / NCIMB 13988 / SH1)</name>
    <dbReference type="NCBI Taxonomy" id="243090"/>
    <lineage>
        <taxon>Bacteria</taxon>
        <taxon>Pseudomonadati</taxon>
        <taxon>Planctomycetota</taxon>
        <taxon>Planctomycetia</taxon>
        <taxon>Pirellulales</taxon>
        <taxon>Pirellulaceae</taxon>
        <taxon>Rhodopirellula</taxon>
    </lineage>
</organism>
<accession>Q7URW4</accession>
<comment type="function">
    <text evidence="1">DNA-dependent RNA polymerase catalyzes the transcription of DNA into RNA using the four ribonucleoside triphosphates as substrates.</text>
</comment>
<comment type="catalytic activity">
    <reaction evidence="1">
        <text>RNA(n) + a ribonucleoside 5'-triphosphate = RNA(n+1) + diphosphate</text>
        <dbReference type="Rhea" id="RHEA:21248"/>
        <dbReference type="Rhea" id="RHEA-COMP:14527"/>
        <dbReference type="Rhea" id="RHEA-COMP:17342"/>
        <dbReference type="ChEBI" id="CHEBI:33019"/>
        <dbReference type="ChEBI" id="CHEBI:61557"/>
        <dbReference type="ChEBI" id="CHEBI:140395"/>
        <dbReference type="EC" id="2.7.7.6"/>
    </reaction>
</comment>
<comment type="cofactor">
    <cofactor evidence="1">
        <name>Mg(2+)</name>
        <dbReference type="ChEBI" id="CHEBI:18420"/>
    </cofactor>
    <text evidence="1">Binds 1 Mg(2+) ion per subunit.</text>
</comment>
<comment type="cofactor">
    <cofactor evidence="1">
        <name>Zn(2+)</name>
        <dbReference type="ChEBI" id="CHEBI:29105"/>
    </cofactor>
    <text evidence="1">Binds 2 Zn(2+) ions per subunit.</text>
</comment>
<comment type="subunit">
    <text evidence="1">The RNAP catalytic core consists of 2 alpha, 1 beta, 1 beta' and 1 omega subunit. When a sigma factor is associated with the core the holoenzyme is formed, which can initiate transcription.</text>
</comment>
<comment type="similarity">
    <text evidence="1">Belongs to the RNA polymerase beta' chain family.</text>
</comment>
<evidence type="ECO:0000255" key="1">
    <source>
        <dbReference type="HAMAP-Rule" id="MF_01322"/>
    </source>
</evidence>
<evidence type="ECO:0000256" key="2">
    <source>
        <dbReference type="SAM" id="MobiDB-lite"/>
    </source>
</evidence>
<feature type="chain" id="PRO_0000067784" description="DNA-directed RNA polymerase subunit beta'">
    <location>
        <begin position="1"/>
        <end position="1429"/>
    </location>
</feature>
<feature type="region of interest" description="Disordered" evidence="2">
    <location>
        <begin position="1407"/>
        <end position="1429"/>
    </location>
</feature>
<feature type="compositionally biased region" description="Polar residues" evidence="2">
    <location>
        <begin position="1419"/>
        <end position="1429"/>
    </location>
</feature>
<feature type="binding site" evidence="1">
    <location>
        <position position="68"/>
    </location>
    <ligand>
        <name>Zn(2+)</name>
        <dbReference type="ChEBI" id="CHEBI:29105"/>
        <label>1</label>
    </ligand>
</feature>
<feature type="binding site" evidence="1">
    <location>
        <position position="70"/>
    </location>
    <ligand>
        <name>Zn(2+)</name>
        <dbReference type="ChEBI" id="CHEBI:29105"/>
        <label>1</label>
    </ligand>
</feature>
<feature type="binding site" evidence="1">
    <location>
        <position position="83"/>
    </location>
    <ligand>
        <name>Zn(2+)</name>
        <dbReference type="ChEBI" id="CHEBI:29105"/>
        <label>1</label>
    </ligand>
</feature>
<feature type="binding site" evidence="1">
    <location>
        <position position="86"/>
    </location>
    <ligand>
        <name>Zn(2+)</name>
        <dbReference type="ChEBI" id="CHEBI:29105"/>
        <label>1</label>
    </ligand>
</feature>
<feature type="binding site" evidence="1">
    <location>
        <position position="459"/>
    </location>
    <ligand>
        <name>Mg(2+)</name>
        <dbReference type="ChEBI" id="CHEBI:18420"/>
    </ligand>
</feature>
<feature type="binding site" evidence="1">
    <location>
        <position position="461"/>
    </location>
    <ligand>
        <name>Mg(2+)</name>
        <dbReference type="ChEBI" id="CHEBI:18420"/>
    </ligand>
</feature>
<feature type="binding site" evidence="1">
    <location>
        <position position="463"/>
    </location>
    <ligand>
        <name>Mg(2+)</name>
        <dbReference type="ChEBI" id="CHEBI:18420"/>
    </ligand>
</feature>
<feature type="binding site" evidence="1">
    <location>
        <position position="805"/>
    </location>
    <ligand>
        <name>Zn(2+)</name>
        <dbReference type="ChEBI" id="CHEBI:29105"/>
        <label>2</label>
    </ligand>
</feature>
<feature type="binding site" evidence="1">
    <location>
        <position position="879"/>
    </location>
    <ligand>
        <name>Zn(2+)</name>
        <dbReference type="ChEBI" id="CHEBI:29105"/>
        <label>2</label>
    </ligand>
</feature>
<feature type="binding site" evidence="1">
    <location>
        <position position="886"/>
    </location>
    <ligand>
        <name>Zn(2+)</name>
        <dbReference type="ChEBI" id="CHEBI:29105"/>
        <label>2</label>
    </ligand>
</feature>
<feature type="binding site" evidence="1">
    <location>
        <position position="889"/>
    </location>
    <ligand>
        <name>Zn(2+)</name>
        <dbReference type="ChEBI" id="CHEBI:29105"/>
        <label>2</label>
    </ligand>
</feature>
<gene>
    <name evidence="1" type="primary">rpoC</name>
    <name type="ordered locus">RB5416</name>
</gene>